<protein>
    <recommendedName>
        <fullName>Omega-theraphotoxin-Hhn1f 1</fullName>
        <shortName>Omega-TRTX-Hhn1f</shortName>
    </recommendedName>
    <alternativeName>
        <fullName>Hainantoxin-IX</fullName>
        <shortName>HNTX-IX</shortName>
    </alternativeName>
    <alternativeName>
        <fullName>Peptide F1-29.54</fullName>
    </alternativeName>
</protein>
<reference key="1">
    <citation type="journal article" date="2010" name="J. Proteome Res.">
        <title>Molecular diversification of peptide toxins from the tarantula Haplopelma hainanum (Ornithoctonus hainana) venom based on transcriptomic, peptidomic, and genomic analyses.</title>
        <authorList>
            <person name="Tang X."/>
            <person name="Zhang Y."/>
            <person name="Hu W."/>
            <person name="Xu D."/>
            <person name="Tao H."/>
            <person name="Yang X."/>
            <person name="Li Y."/>
            <person name="Jiang L."/>
            <person name="Liang S."/>
        </authorList>
    </citation>
    <scope>NUCLEOTIDE SEQUENCE [LARGE SCALE GENOMIC DNA / MRNA]</scope>
    <scope>PROTEIN SEQUENCE OF 51-85</scope>
    <scope>IDENTIFICATION BY MASS SPECTROMETRY</scope>
    <source>
        <tissue>Venom</tissue>
        <tissue>Venom gland</tissue>
    </source>
</reference>
<evidence type="ECO:0000250" key="1"/>
<evidence type="ECO:0000255" key="2"/>
<evidence type="ECO:0000269" key="3">
    <source>
    </source>
</evidence>
<evidence type="ECO:0000305" key="4"/>
<sequence length="86" mass="9673">MKSIVFVALFGLALLAVVCSASEDAHKELLKEVVRAMVVDKTDAVQAEERECRWYLGGCSQDGDCCKHLQCHSNYEWCIWDGTFSK</sequence>
<keyword id="KW-0903">Direct protein sequencing</keyword>
<keyword id="KW-1015">Disulfide bond</keyword>
<keyword id="KW-0872">Ion channel impairing toxin</keyword>
<keyword id="KW-0960">Knottin</keyword>
<keyword id="KW-0964">Secreted</keyword>
<keyword id="KW-0732">Signal</keyword>
<keyword id="KW-0800">Toxin</keyword>
<accession>D2Y236</accession>
<proteinExistence type="evidence at protein level"/>
<feature type="signal peptide" evidence="2">
    <location>
        <begin position="1"/>
        <end position="21"/>
    </location>
</feature>
<feature type="propeptide" id="PRO_0000400649" evidence="3">
    <location>
        <begin position="22"/>
        <end position="50"/>
    </location>
</feature>
<feature type="peptide" id="PRO_0000400650" description="Omega-theraphotoxin-Hhn1f 1">
    <location>
        <begin position="51"/>
        <end position="86"/>
    </location>
</feature>
<feature type="disulfide bond" evidence="1">
    <location>
        <begin position="52"/>
        <end position="66"/>
    </location>
</feature>
<feature type="disulfide bond" evidence="1">
    <location>
        <begin position="59"/>
        <end position="71"/>
    </location>
</feature>
<feature type="disulfide bond" evidence="1">
    <location>
        <begin position="65"/>
        <end position="78"/>
    </location>
</feature>
<comment type="function">
    <text evidence="1">Ion channel inhibitor.</text>
</comment>
<comment type="subcellular location">
    <subcellularLocation>
        <location>Secreted</location>
    </subcellularLocation>
</comment>
<comment type="tissue specificity">
    <text>Expressed by the venom gland.</text>
</comment>
<comment type="domain">
    <text evidence="1">The presence of a 'disulfide through disulfide knot' structurally defines this protein as a knottin.</text>
</comment>
<comment type="similarity">
    <text evidence="4">Belongs to the neurotoxin 10 (Hwtx-1) family. 17 (Hntx-9) subfamily.</text>
</comment>
<name>H9A01_CYRHA</name>
<dbReference type="EMBL" id="GU292913">
    <property type="protein sequence ID" value="ADB56729.1"/>
    <property type="molecule type" value="mRNA"/>
</dbReference>
<dbReference type="EMBL" id="GU293093">
    <property type="protein sequence ID" value="ADB56909.1"/>
    <property type="molecule type" value="Genomic_DNA"/>
</dbReference>
<dbReference type="SMR" id="D2Y236"/>
<dbReference type="ArachnoServer" id="AS001945">
    <property type="toxin name" value="omega-theraphotoxin-Hhn1f"/>
</dbReference>
<dbReference type="GO" id="GO:0005576">
    <property type="term" value="C:extracellular region"/>
    <property type="evidence" value="ECO:0007669"/>
    <property type="project" value="UniProtKB-SubCell"/>
</dbReference>
<dbReference type="GO" id="GO:0008200">
    <property type="term" value="F:ion channel inhibitor activity"/>
    <property type="evidence" value="ECO:0007669"/>
    <property type="project" value="InterPro"/>
</dbReference>
<dbReference type="GO" id="GO:0090729">
    <property type="term" value="F:toxin activity"/>
    <property type="evidence" value="ECO:0007669"/>
    <property type="project" value="UniProtKB-KW"/>
</dbReference>
<dbReference type="InterPro" id="IPR011696">
    <property type="entry name" value="Huwentoxin-1"/>
</dbReference>
<dbReference type="InterPro" id="IPR013140">
    <property type="entry name" value="Huwentoxin_CS1"/>
</dbReference>
<dbReference type="Pfam" id="PF07740">
    <property type="entry name" value="Toxin_12"/>
    <property type="match status" value="1"/>
</dbReference>
<dbReference type="SUPFAM" id="SSF57059">
    <property type="entry name" value="omega toxin-like"/>
    <property type="match status" value="1"/>
</dbReference>
<dbReference type="PROSITE" id="PS60021">
    <property type="entry name" value="HWTX_1"/>
    <property type="match status" value="1"/>
</dbReference>
<organism>
    <name type="scientific">Cyriopagopus hainanus</name>
    <name type="common">Chinese bird spider</name>
    <name type="synonym">Haplopelma hainanum</name>
    <dbReference type="NCBI Taxonomy" id="209901"/>
    <lineage>
        <taxon>Eukaryota</taxon>
        <taxon>Metazoa</taxon>
        <taxon>Ecdysozoa</taxon>
        <taxon>Arthropoda</taxon>
        <taxon>Chelicerata</taxon>
        <taxon>Arachnida</taxon>
        <taxon>Araneae</taxon>
        <taxon>Mygalomorphae</taxon>
        <taxon>Theraphosidae</taxon>
        <taxon>Haplopelma</taxon>
    </lineage>
</organism>